<name>AMIE_PSEFS</name>
<evidence type="ECO:0000255" key="1">
    <source>
        <dbReference type="HAMAP-Rule" id="MF_01242"/>
    </source>
</evidence>
<evidence type="ECO:0000255" key="2">
    <source>
        <dbReference type="PROSITE-ProRule" id="PRU00054"/>
    </source>
</evidence>
<dbReference type="EC" id="3.5.1.4" evidence="1"/>
<dbReference type="EMBL" id="AM181176">
    <property type="protein sequence ID" value="CAY48772.1"/>
    <property type="molecule type" value="Genomic_DNA"/>
</dbReference>
<dbReference type="RefSeq" id="WP_012723740.1">
    <property type="nucleotide sequence ID" value="NC_012660.1"/>
</dbReference>
<dbReference type="SMR" id="C3K9E6"/>
<dbReference type="PATRIC" id="fig|216595.4.peg.2739"/>
<dbReference type="eggNOG" id="COG0388">
    <property type="taxonomic scope" value="Bacteria"/>
</dbReference>
<dbReference type="HOGENOM" id="CLU_071797_0_0_6"/>
<dbReference type="OrthoDB" id="9803803at2"/>
<dbReference type="GO" id="GO:0004040">
    <property type="term" value="F:amidase activity"/>
    <property type="evidence" value="ECO:0007669"/>
    <property type="project" value="UniProtKB-UniRule"/>
</dbReference>
<dbReference type="CDD" id="cd07565">
    <property type="entry name" value="aliphatic_amidase"/>
    <property type="match status" value="1"/>
</dbReference>
<dbReference type="FunFam" id="3.60.110.10:FF:000014">
    <property type="entry name" value="Aliphatic amidase"/>
    <property type="match status" value="1"/>
</dbReference>
<dbReference type="Gene3D" id="3.60.110.10">
    <property type="entry name" value="Carbon-nitrogen hydrolase"/>
    <property type="match status" value="1"/>
</dbReference>
<dbReference type="HAMAP" id="MF_01242">
    <property type="entry name" value="Aliphatic_amidase"/>
    <property type="match status" value="1"/>
</dbReference>
<dbReference type="InterPro" id="IPR050345">
    <property type="entry name" value="Aliph_Amidase/BUP"/>
</dbReference>
<dbReference type="InterPro" id="IPR023719">
    <property type="entry name" value="Aliphatic_amidase"/>
</dbReference>
<dbReference type="InterPro" id="IPR003010">
    <property type="entry name" value="C-N_Hydrolase"/>
</dbReference>
<dbReference type="InterPro" id="IPR036526">
    <property type="entry name" value="C-N_Hydrolase_sf"/>
</dbReference>
<dbReference type="NCBIfam" id="NF009802">
    <property type="entry name" value="PRK13286.1"/>
    <property type="match status" value="1"/>
</dbReference>
<dbReference type="PANTHER" id="PTHR43674:SF14">
    <property type="entry name" value="ALIPHATIC AMIDASE"/>
    <property type="match status" value="1"/>
</dbReference>
<dbReference type="PANTHER" id="PTHR43674">
    <property type="entry name" value="NITRILASE C965.09-RELATED"/>
    <property type="match status" value="1"/>
</dbReference>
<dbReference type="Pfam" id="PF00795">
    <property type="entry name" value="CN_hydrolase"/>
    <property type="match status" value="1"/>
</dbReference>
<dbReference type="SUPFAM" id="SSF56317">
    <property type="entry name" value="Carbon-nitrogen hydrolase"/>
    <property type="match status" value="1"/>
</dbReference>
<dbReference type="PROSITE" id="PS50263">
    <property type="entry name" value="CN_HYDROLASE"/>
    <property type="match status" value="1"/>
</dbReference>
<organism>
    <name type="scientific">Pseudomonas fluorescens (strain SBW25)</name>
    <dbReference type="NCBI Taxonomy" id="216595"/>
    <lineage>
        <taxon>Bacteria</taxon>
        <taxon>Pseudomonadati</taxon>
        <taxon>Pseudomonadota</taxon>
        <taxon>Gammaproteobacteria</taxon>
        <taxon>Pseudomonadales</taxon>
        <taxon>Pseudomonadaceae</taxon>
        <taxon>Pseudomonas</taxon>
    </lineage>
</organism>
<reference key="1">
    <citation type="journal article" date="2009" name="Genome Biol.">
        <title>Genomic and genetic analyses of diversity and plant interactions of Pseudomonas fluorescens.</title>
        <authorList>
            <person name="Silby M.W."/>
            <person name="Cerdeno-Tarraga A.M."/>
            <person name="Vernikos G.S."/>
            <person name="Giddens S.R."/>
            <person name="Jackson R.W."/>
            <person name="Preston G.M."/>
            <person name="Zhang X.-X."/>
            <person name="Moon C.D."/>
            <person name="Gehrig S.M."/>
            <person name="Godfrey S.A.C."/>
            <person name="Knight C.G."/>
            <person name="Malone J.G."/>
            <person name="Robinson Z."/>
            <person name="Spiers A.J."/>
            <person name="Harris S."/>
            <person name="Challis G.L."/>
            <person name="Yaxley A.M."/>
            <person name="Harris D."/>
            <person name="Seeger K."/>
            <person name="Murphy L."/>
            <person name="Rutter S."/>
            <person name="Squares R."/>
            <person name="Quail M.A."/>
            <person name="Saunders E."/>
            <person name="Mavromatis K."/>
            <person name="Brettin T.S."/>
            <person name="Bentley S.D."/>
            <person name="Hothersall J."/>
            <person name="Stephens E."/>
            <person name="Thomas C.M."/>
            <person name="Parkhill J."/>
            <person name="Levy S.B."/>
            <person name="Rainey P.B."/>
            <person name="Thomson N.R."/>
        </authorList>
    </citation>
    <scope>NUCLEOTIDE SEQUENCE [LARGE SCALE GENOMIC DNA]</scope>
    <source>
        <strain>SBW25</strain>
    </source>
</reference>
<gene>
    <name evidence="1" type="primary">amiE</name>
    <name type="ordered locus">PFLU_2536</name>
</gene>
<feature type="chain" id="PRO_1000214090" description="Aliphatic amidase">
    <location>
        <begin position="1"/>
        <end position="347"/>
    </location>
</feature>
<feature type="domain" description="CN hydrolase" evidence="2">
    <location>
        <begin position="13"/>
        <end position="260"/>
    </location>
</feature>
<feature type="active site" description="Proton acceptor" evidence="1">
    <location>
        <position position="59"/>
    </location>
</feature>
<feature type="active site" description="Proton donor" evidence="1">
    <location>
        <position position="134"/>
    </location>
</feature>
<feature type="active site" description="Nucleophile" evidence="1">
    <location>
        <position position="166"/>
    </location>
</feature>
<sequence length="347" mass="38196">MRHGDISSSPDTVGVAVVNYKMPRLHSKAEVIDNASKIAEIIVGMKQGLPGMDLVVFPEYSTMGIMYDHDEMMATAASIPGEETAIFSAACRQANTWGVFSLTGERHEAHPHKAPYNTLVLINNLGEIVQRYRKCIPWCPIEGWYPGDRTYVCDGPKGMKISLIICDDGNYPEIWRDCAMKGAELIVRCQGYMYPAKEQQVQMSKSMAWANNCYVAVANAAGFDGVYSYFGHSAIIGFDGRTLGECGEEEMGIQYAQLSVSQIRDARANDQSQNHLFKLLHRGYTGMHASGDGDKGVADCPFEFYRTWVLDAQKAQENVEKITRSTVGVAECPVGNLPHGGKEQTAG</sequence>
<protein>
    <recommendedName>
        <fullName evidence="1">Aliphatic amidase</fullName>
        <ecNumber evidence="1">3.5.1.4</ecNumber>
    </recommendedName>
    <alternativeName>
        <fullName evidence="1">Acylamide amidohydrolase</fullName>
    </alternativeName>
</protein>
<accession>C3K9E6</accession>
<comment type="function">
    <text evidence="1">Catalyzes the hydrolysis of short-chain aliphatic amides to their corresponding organic acids with release of ammonia.</text>
</comment>
<comment type="function">
    <text evidence="1">Also exhibits in vitro acyl transferase activity, transferring the acyl moiety of short-chain amides to hydroxylamine to form hydroxamates.</text>
</comment>
<comment type="catalytic activity">
    <reaction evidence="1">
        <text>a monocarboxylic acid amide + H2O = a monocarboxylate + NH4(+)</text>
        <dbReference type="Rhea" id="RHEA:12020"/>
        <dbReference type="ChEBI" id="CHEBI:15377"/>
        <dbReference type="ChEBI" id="CHEBI:28938"/>
        <dbReference type="ChEBI" id="CHEBI:35757"/>
        <dbReference type="ChEBI" id="CHEBI:83628"/>
        <dbReference type="EC" id="3.5.1.4"/>
    </reaction>
</comment>
<comment type="similarity">
    <text evidence="1">Belongs to the carbon-nitrogen hydrolase superfamily. Aliphatic amidase family.</text>
</comment>
<proteinExistence type="inferred from homology"/>
<keyword id="KW-0378">Hydrolase</keyword>